<reference key="1">
    <citation type="submission" date="2003-08" db="EMBL/GenBank/DDBJ databases">
        <authorList>
            <consortium name="NIH - Zebrafish Gene Collection (ZGC) project"/>
        </authorList>
    </citation>
    <scope>NUCLEOTIDE SEQUENCE [LARGE SCALE MRNA]</scope>
    <source>
        <strain>AB</strain>
    </source>
</reference>
<gene>
    <name type="primary">amdhd1</name>
</gene>
<accession>Q7SXK5</accession>
<evidence type="ECO:0000250" key="1"/>
<evidence type="ECO:0000250" key="2">
    <source>
        <dbReference type="UniProtKB" id="A0KF84"/>
    </source>
</evidence>
<evidence type="ECO:0000250" key="3">
    <source>
        <dbReference type="UniProtKB" id="P42084"/>
    </source>
</evidence>
<evidence type="ECO:0000250" key="4">
    <source>
        <dbReference type="UniProtKB" id="Q8U8Z6"/>
    </source>
</evidence>
<evidence type="ECO:0000305" key="5"/>
<proteinExistence type="evidence at transcript level"/>
<protein>
    <recommendedName>
        <fullName>Probable imidazolonepropionase</fullName>
        <ecNumber>3.5.2.7</ecNumber>
    </recommendedName>
    <alternativeName>
        <fullName>Amidohydrolase domain-containing protein 1</fullName>
    </alternativeName>
</protein>
<dbReference type="EC" id="3.5.2.7"/>
<dbReference type="EMBL" id="BC055559">
    <property type="protein sequence ID" value="AAH55559.1"/>
    <property type="status" value="ALT_INIT"/>
    <property type="molecule type" value="mRNA"/>
</dbReference>
<dbReference type="RefSeq" id="NP_001159825.2">
    <property type="nucleotide sequence ID" value="NM_001166353.2"/>
</dbReference>
<dbReference type="SMR" id="Q7SXK5"/>
<dbReference type="FunCoup" id="Q7SXK5">
    <property type="interactions" value="28"/>
</dbReference>
<dbReference type="STRING" id="7955.ENSDARP00000028107"/>
<dbReference type="PaxDb" id="7955-ENSDARP00000028107"/>
<dbReference type="GeneID" id="402826"/>
<dbReference type="KEGG" id="dre:402826"/>
<dbReference type="AGR" id="ZFIN:ZDB-GENE-160728-110"/>
<dbReference type="CTD" id="144193"/>
<dbReference type="ZFIN" id="ZDB-GENE-160728-110">
    <property type="gene designation" value="amdhd1"/>
</dbReference>
<dbReference type="eggNOG" id="KOG3968">
    <property type="taxonomic scope" value="Eukaryota"/>
</dbReference>
<dbReference type="InParanoid" id="Q7SXK5"/>
<dbReference type="OrthoDB" id="194468at2759"/>
<dbReference type="PhylomeDB" id="Q7SXK5"/>
<dbReference type="Reactome" id="R-DRE-70921">
    <property type="pathway name" value="Histidine catabolism"/>
</dbReference>
<dbReference type="UniPathway" id="UPA00379">
    <property type="reaction ID" value="UER00551"/>
</dbReference>
<dbReference type="PRO" id="PR:Q7SXK5"/>
<dbReference type="Proteomes" id="UP000000437">
    <property type="component" value="Alternate scaffold 7"/>
</dbReference>
<dbReference type="Proteomes" id="UP000000437">
    <property type="component" value="Chromosome 7"/>
</dbReference>
<dbReference type="GO" id="GO:0005737">
    <property type="term" value="C:cytoplasm"/>
    <property type="evidence" value="ECO:0007669"/>
    <property type="project" value="InterPro"/>
</dbReference>
<dbReference type="GO" id="GO:0050480">
    <property type="term" value="F:imidazolonepropionase activity"/>
    <property type="evidence" value="ECO:0000318"/>
    <property type="project" value="GO_Central"/>
</dbReference>
<dbReference type="GO" id="GO:0046872">
    <property type="term" value="F:metal ion binding"/>
    <property type="evidence" value="ECO:0007669"/>
    <property type="project" value="UniProtKB-KW"/>
</dbReference>
<dbReference type="GO" id="GO:0006548">
    <property type="term" value="P:L-histidine catabolic process"/>
    <property type="evidence" value="ECO:0000318"/>
    <property type="project" value="GO_Central"/>
</dbReference>
<dbReference type="GO" id="GO:0019556">
    <property type="term" value="P:L-histidine catabolic process to glutamate and formamide"/>
    <property type="evidence" value="ECO:0007669"/>
    <property type="project" value="UniProtKB-UniPathway"/>
</dbReference>
<dbReference type="GO" id="GO:0019557">
    <property type="term" value="P:L-histidine catabolic process to glutamate and formate"/>
    <property type="evidence" value="ECO:0007669"/>
    <property type="project" value="UniProtKB-UniPathway"/>
</dbReference>
<dbReference type="CDD" id="cd01296">
    <property type="entry name" value="Imidazolone-5PH"/>
    <property type="match status" value="1"/>
</dbReference>
<dbReference type="FunFam" id="3.20.20.140:FF:000007">
    <property type="entry name" value="Imidazolonepropionase"/>
    <property type="match status" value="1"/>
</dbReference>
<dbReference type="Gene3D" id="3.20.20.140">
    <property type="entry name" value="Metal-dependent hydrolases"/>
    <property type="match status" value="1"/>
</dbReference>
<dbReference type="Gene3D" id="2.30.40.10">
    <property type="entry name" value="Urease, subunit C, domain 1"/>
    <property type="match status" value="1"/>
</dbReference>
<dbReference type="InterPro" id="IPR006680">
    <property type="entry name" value="Amidohydro-rel"/>
</dbReference>
<dbReference type="InterPro" id="IPR005920">
    <property type="entry name" value="HutI"/>
</dbReference>
<dbReference type="InterPro" id="IPR011059">
    <property type="entry name" value="Metal-dep_hydrolase_composite"/>
</dbReference>
<dbReference type="InterPro" id="IPR032466">
    <property type="entry name" value="Metal_Hydrolase"/>
</dbReference>
<dbReference type="NCBIfam" id="TIGR01224">
    <property type="entry name" value="hutI"/>
    <property type="match status" value="1"/>
</dbReference>
<dbReference type="PANTHER" id="PTHR42752">
    <property type="entry name" value="IMIDAZOLONEPROPIONASE"/>
    <property type="match status" value="1"/>
</dbReference>
<dbReference type="PANTHER" id="PTHR42752:SF1">
    <property type="entry name" value="IMIDAZOLONEPROPIONASE-RELATED"/>
    <property type="match status" value="1"/>
</dbReference>
<dbReference type="Pfam" id="PF01979">
    <property type="entry name" value="Amidohydro_1"/>
    <property type="match status" value="1"/>
</dbReference>
<dbReference type="SUPFAM" id="SSF51338">
    <property type="entry name" value="Composite domain of metallo-dependent hydrolases"/>
    <property type="match status" value="1"/>
</dbReference>
<dbReference type="SUPFAM" id="SSF51556">
    <property type="entry name" value="Metallo-dependent hydrolases"/>
    <property type="match status" value="1"/>
</dbReference>
<feature type="chain" id="PRO_0000282584" description="Probable imidazolonepropionase">
    <location>
        <begin position="1"/>
        <end position="433"/>
    </location>
</feature>
<feature type="binding site" evidence="3">
    <location>
        <position position="160"/>
    </location>
    <ligand>
        <name>4-imidazolone-5-propanoate</name>
        <dbReference type="ChEBI" id="CHEBI:77893"/>
    </ligand>
</feature>
<feature type="binding site" evidence="4">
    <location>
        <position position="160"/>
    </location>
    <ligand>
        <name>N-formimidoyl-L-glutamate</name>
        <dbReference type="ChEBI" id="CHEBI:58928"/>
    </ligand>
</feature>
<feature type="binding site" evidence="3">
    <location>
        <position position="193"/>
    </location>
    <ligand>
        <name>4-imidazolone-5-propanoate</name>
        <dbReference type="ChEBI" id="CHEBI:77893"/>
    </ligand>
</feature>
<feature type="binding site" evidence="2">
    <location>
        <position position="261"/>
    </location>
    <ligand>
        <name>Fe(3+)</name>
        <dbReference type="ChEBI" id="CHEBI:29034"/>
    </ligand>
</feature>
<feature type="binding site" evidence="3">
    <location>
        <position position="261"/>
    </location>
    <ligand>
        <name>Zn(2+)</name>
        <dbReference type="ChEBI" id="CHEBI:29105"/>
    </ligand>
</feature>
<feature type="binding site" evidence="3">
    <location>
        <position position="264"/>
    </location>
    <ligand>
        <name>4-imidazolone-5-propanoate</name>
        <dbReference type="ChEBI" id="CHEBI:77893"/>
    </ligand>
</feature>
<feature type="binding site" evidence="2">
    <location>
        <position position="335"/>
    </location>
    <ligand>
        <name>Fe(3+)</name>
        <dbReference type="ChEBI" id="CHEBI:29034"/>
    </ligand>
</feature>
<feature type="binding site" evidence="3">
    <location>
        <position position="335"/>
    </location>
    <ligand>
        <name>Zn(2+)</name>
        <dbReference type="ChEBI" id="CHEBI:29105"/>
    </ligand>
</feature>
<feature type="binding site" evidence="4">
    <location>
        <position position="337"/>
    </location>
    <ligand>
        <name>N-formimidoyl-L-glutamate</name>
        <dbReference type="ChEBI" id="CHEBI:58928"/>
    </ligand>
</feature>
<organism>
    <name type="scientific">Danio rerio</name>
    <name type="common">Zebrafish</name>
    <name type="synonym">Brachydanio rerio</name>
    <dbReference type="NCBI Taxonomy" id="7955"/>
    <lineage>
        <taxon>Eukaryota</taxon>
        <taxon>Metazoa</taxon>
        <taxon>Chordata</taxon>
        <taxon>Craniata</taxon>
        <taxon>Vertebrata</taxon>
        <taxon>Euteleostomi</taxon>
        <taxon>Actinopterygii</taxon>
        <taxon>Neopterygii</taxon>
        <taxon>Teleostei</taxon>
        <taxon>Ostariophysi</taxon>
        <taxon>Cypriniformes</taxon>
        <taxon>Danionidae</taxon>
        <taxon>Danioninae</taxon>
        <taxon>Danio</taxon>
    </lineage>
</organism>
<comment type="catalytic activity">
    <reaction>
        <text>4-imidazolone-5-propanoate + H2O = N-formimidoyl-L-glutamate</text>
        <dbReference type="Rhea" id="RHEA:23660"/>
        <dbReference type="ChEBI" id="CHEBI:15377"/>
        <dbReference type="ChEBI" id="CHEBI:58928"/>
        <dbReference type="ChEBI" id="CHEBI:77893"/>
        <dbReference type="EC" id="3.5.2.7"/>
    </reaction>
</comment>
<comment type="cofactor">
    <cofactor evidence="1">
        <name>Zn(2+)</name>
        <dbReference type="ChEBI" id="CHEBI:29105"/>
    </cofactor>
    <cofactor evidence="1">
        <name>Fe(3+)</name>
        <dbReference type="ChEBI" id="CHEBI:29034"/>
    </cofactor>
    <text evidence="1">Binds 1 zinc or iron ion per subunit.</text>
</comment>
<comment type="pathway">
    <text>Amino-acid degradation; L-histidine degradation into L-glutamate; N-formimidoyl-L-glutamate from L-histidine: step 3/3.</text>
</comment>
<comment type="similarity">
    <text evidence="5">Belongs to the metallo-dependent hydrolases superfamily. HutI family.</text>
</comment>
<comment type="sequence caution" evidence="5">
    <conflict type="erroneous initiation">
        <sequence resource="EMBL-CDS" id="AAH55559"/>
    </conflict>
</comment>
<name>HUTI_DANRE</name>
<keyword id="KW-0369">Histidine metabolism</keyword>
<keyword id="KW-0378">Hydrolase</keyword>
<keyword id="KW-0408">Iron</keyword>
<keyword id="KW-0479">Metal-binding</keyword>
<keyword id="KW-1185">Reference proteome</keyword>
<keyword id="KW-0862">Zinc</keyword>
<sequence>MSANSFKLLVKNATQLVLVCRNGEKYLTRDEMQALAVLENASVLIGHDGLIKAVGPADVIETQFEGAKFDNVLDASGMCVLPGLVDAHTHPVWAGDRVHEFAMKLAGATYMEVHEAGGGIHFTVAHTRSASEQHLLAALKSRLERMMRAGTTLVECKSGYGLELDIEVKMLRVINSARKSLPIGISATYCGAHAVPKGKTMEEATKDIVAVQLPKIKHLSASGDLQVDNIDVFCEKGVFDLTSTRCILQAGKDMGLNINFHGDELHPMNSAHLGAELGALAISHLEEVTDDGIVAMAKSKTSAVLLPTTAYILRLTPPRARDMLDAGVIVALGSDFNPNAYCFSMPMVMHLACVMMKMSMPEALAASTINAAYALNRSQTHGSLEVGKQGDLVIINAPRWEHLVYQFGGHQELIRYVIIKGDFVYENDKVLNL</sequence>